<proteinExistence type="evidence at protein level"/>
<feature type="chain" id="PRO_0000164503" description="Uridine kinase">
    <location>
        <begin position="1"/>
        <end position="208"/>
    </location>
</feature>
<feature type="binding site" evidence="1">
    <location>
        <begin position="12"/>
        <end position="19"/>
    </location>
    <ligand>
        <name>ATP</name>
        <dbReference type="ChEBI" id="CHEBI:30616"/>
    </ligand>
</feature>
<dbReference type="EC" id="2.7.1.48" evidence="1"/>
<dbReference type="EMBL" id="CP000003">
    <property type="protein sequence ID" value="AAT87225.1"/>
    <property type="status" value="ALT_INIT"/>
    <property type="molecule type" value="Genomic_DNA"/>
</dbReference>
<dbReference type="RefSeq" id="WP_002984060.1">
    <property type="nucleotide sequence ID" value="NC_006086.1"/>
</dbReference>
<dbReference type="SMR" id="Q5XBI8"/>
<dbReference type="GeneID" id="69900663"/>
<dbReference type="KEGG" id="spa:M6_Spy1090"/>
<dbReference type="HOGENOM" id="CLU_021278_1_2_9"/>
<dbReference type="UniPathway" id="UPA00574">
    <property type="reaction ID" value="UER00637"/>
</dbReference>
<dbReference type="UniPathway" id="UPA00579">
    <property type="reaction ID" value="UER00640"/>
</dbReference>
<dbReference type="Proteomes" id="UP000001167">
    <property type="component" value="Chromosome"/>
</dbReference>
<dbReference type="GO" id="GO:0005737">
    <property type="term" value="C:cytoplasm"/>
    <property type="evidence" value="ECO:0007669"/>
    <property type="project" value="UniProtKB-SubCell"/>
</dbReference>
<dbReference type="GO" id="GO:0005524">
    <property type="term" value="F:ATP binding"/>
    <property type="evidence" value="ECO:0007669"/>
    <property type="project" value="UniProtKB-UniRule"/>
</dbReference>
<dbReference type="GO" id="GO:0043771">
    <property type="term" value="F:cytidine kinase activity"/>
    <property type="evidence" value="ECO:0007669"/>
    <property type="project" value="RHEA"/>
</dbReference>
<dbReference type="GO" id="GO:0004849">
    <property type="term" value="F:uridine kinase activity"/>
    <property type="evidence" value="ECO:0007669"/>
    <property type="project" value="UniProtKB-UniRule"/>
</dbReference>
<dbReference type="GO" id="GO:0044211">
    <property type="term" value="P:CTP salvage"/>
    <property type="evidence" value="ECO:0007669"/>
    <property type="project" value="UniProtKB-UniRule"/>
</dbReference>
<dbReference type="GO" id="GO:0044206">
    <property type="term" value="P:UMP salvage"/>
    <property type="evidence" value="ECO:0007669"/>
    <property type="project" value="UniProtKB-UniRule"/>
</dbReference>
<dbReference type="CDD" id="cd02023">
    <property type="entry name" value="UMPK"/>
    <property type="match status" value="1"/>
</dbReference>
<dbReference type="Gene3D" id="3.40.50.300">
    <property type="entry name" value="P-loop containing nucleotide triphosphate hydrolases"/>
    <property type="match status" value="1"/>
</dbReference>
<dbReference type="HAMAP" id="MF_00551">
    <property type="entry name" value="Uridine_kinase"/>
    <property type="match status" value="1"/>
</dbReference>
<dbReference type="InterPro" id="IPR027417">
    <property type="entry name" value="P-loop_NTPase"/>
</dbReference>
<dbReference type="InterPro" id="IPR006083">
    <property type="entry name" value="PRK/URK"/>
</dbReference>
<dbReference type="InterPro" id="IPR026008">
    <property type="entry name" value="Uridine_kinase"/>
</dbReference>
<dbReference type="InterPro" id="IPR000764">
    <property type="entry name" value="Uridine_kinase-like"/>
</dbReference>
<dbReference type="NCBIfam" id="NF004018">
    <property type="entry name" value="PRK05480.1"/>
    <property type="match status" value="1"/>
</dbReference>
<dbReference type="NCBIfam" id="TIGR00235">
    <property type="entry name" value="udk"/>
    <property type="match status" value="1"/>
</dbReference>
<dbReference type="PANTHER" id="PTHR10285">
    <property type="entry name" value="URIDINE KINASE"/>
    <property type="match status" value="1"/>
</dbReference>
<dbReference type="Pfam" id="PF00485">
    <property type="entry name" value="PRK"/>
    <property type="match status" value="1"/>
</dbReference>
<dbReference type="PRINTS" id="PR00988">
    <property type="entry name" value="URIDINKINASE"/>
</dbReference>
<dbReference type="SUPFAM" id="SSF52540">
    <property type="entry name" value="P-loop containing nucleoside triphosphate hydrolases"/>
    <property type="match status" value="1"/>
</dbReference>
<accession>Q5XBI8</accession>
<accession>P82573</accession>
<keyword id="KW-0067">ATP-binding</keyword>
<keyword id="KW-0963">Cytoplasm</keyword>
<keyword id="KW-0903">Direct protein sequencing</keyword>
<keyword id="KW-0418">Kinase</keyword>
<keyword id="KW-0547">Nucleotide-binding</keyword>
<keyword id="KW-0808">Transferase</keyword>
<name>URK_STRP6</name>
<evidence type="ECO:0000255" key="1">
    <source>
        <dbReference type="HAMAP-Rule" id="MF_00551"/>
    </source>
</evidence>
<evidence type="ECO:0000269" key="2">
    <source ref="2"/>
</evidence>
<evidence type="ECO:0000305" key="3"/>
<sequence length="208" mass="23816">MLKKPIIIGVTGGSGGGKTSVSRAILDSFPNARIAMIQHDSYYKDQSHMSFEERVKTNYDHPLAFDTDFMIQQLKELLAGRPVDIPIYDYKKHTRSNTTFRQDPQDVIIVEGILVLEDERLRDLMDIKLFVDTDDDIRIIRRIKRDMMERGRSLESIIDQYTSVVKPMYHQFIEPSKRYADIVIPEGVSNVVAIDVINSKIASILGEV</sequence>
<organism>
    <name type="scientific">Streptococcus pyogenes serotype M6 (strain ATCC BAA-946 / MGAS10394)</name>
    <dbReference type="NCBI Taxonomy" id="286636"/>
    <lineage>
        <taxon>Bacteria</taxon>
        <taxon>Bacillati</taxon>
        <taxon>Bacillota</taxon>
        <taxon>Bacilli</taxon>
        <taxon>Lactobacillales</taxon>
        <taxon>Streptococcaceae</taxon>
        <taxon>Streptococcus</taxon>
    </lineage>
</organism>
<gene>
    <name evidence="1" type="primary">udk</name>
    <name type="ordered locus">M6_Spy1090</name>
</gene>
<protein>
    <recommendedName>
        <fullName evidence="1">Uridine kinase</fullName>
        <ecNumber evidence="1">2.7.1.48</ecNumber>
    </recommendedName>
    <alternativeName>
        <fullName evidence="1">Cytidine monophosphokinase</fullName>
    </alternativeName>
    <alternativeName>
        <fullName evidence="1">Uridine monophosphokinase</fullName>
    </alternativeName>
</protein>
<comment type="catalytic activity">
    <reaction evidence="1">
        <text>uridine + ATP = UMP + ADP + H(+)</text>
        <dbReference type="Rhea" id="RHEA:16825"/>
        <dbReference type="ChEBI" id="CHEBI:15378"/>
        <dbReference type="ChEBI" id="CHEBI:16704"/>
        <dbReference type="ChEBI" id="CHEBI:30616"/>
        <dbReference type="ChEBI" id="CHEBI:57865"/>
        <dbReference type="ChEBI" id="CHEBI:456216"/>
        <dbReference type="EC" id="2.7.1.48"/>
    </reaction>
</comment>
<comment type="catalytic activity">
    <reaction evidence="1">
        <text>cytidine + ATP = CMP + ADP + H(+)</text>
        <dbReference type="Rhea" id="RHEA:24674"/>
        <dbReference type="ChEBI" id="CHEBI:15378"/>
        <dbReference type="ChEBI" id="CHEBI:17562"/>
        <dbReference type="ChEBI" id="CHEBI:30616"/>
        <dbReference type="ChEBI" id="CHEBI:60377"/>
        <dbReference type="ChEBI" id="CHEBI:456216"/>
        <dbReference type="EC" id="2.7.1.48"/>
    </reaction>
</comment>
<comment type="pathway">
    <text evidence="1">Pyrimidine metabolism; CTP biosynthesis via salvage pathway; CTP from cytidine: step 1/3.</text>
</comment>
<comment type="pathway">
    <text evidence="1">Pyrimidine metabolism; UMP biosynthesis via salvage pathway; UMP from uridine: step 1/1.</text>
</comment>
<comment type="subcellular location">
    <subcellularLocation>
        <location evidence="1">Cytoplasm</location>
    </subcellularLocation>
</comment>
<comment type="mass spectrometry" mass="24334.01" method="Electrospray" evidence="2"/>
<comment type="similarity">
    <text evidence="1">Belongs to the uridine kinase family.</text>
</comment>
<comment type="sequence caution" evidence="3">
    <conflict type="erroneous initiation">
        <sequence resource="EMBL-CDS" id="AAT87225"/>
    </conflict>
</comment>
<reference key="1">
    <citation type="journal article" date="2004" name="J. Infect. Dis.">
        <title>Progress toward characterization of the group A Streptococcus metagenome: complete genome sequence of a macrolide-resistant serotype M6 strain.</title>
        <authorList>
            <person name="Banks D.J."/>
            <person name="Porcella S.F."/>
            <person name="Barbian K.D."/>
            <person name="Beres S.B."/>
            <person name="Philips L.E."/>
            <person name="Voyich J.M."/>
            <person name="DeLeo F.R."/>
            <person name="Martin J.M."/>
            <person name="Somerville G.A."/>
            <person name="Musser J.M."/>
        </authorList>
    </citation>
    <scope>NUCLEOTIDE SEQUENCE [LARGE SCALE GENOMIC DNA]</scope>
    <source>
        <strain>ATCC BAA-946 / MGAS10394</strain>
    </source>
</reference>
<reference key="2">
    <citation type="submission" date="2000-05" db="UniProtKB">
        <title>Two-dimensional gel electrophoresis map of Streptococcus pyogenes proteins.</title>
        <authorList>
            <person name="Hogan D.A."/>
            <person name="Du P."/>
            <person name="Stevenson T.I."/>
            <person name="Whitton M."/>
            <person name="Kilby G.W."/>
            <person name="Rogers J."/>
            <person name="VanBogelen R.A."/>
        </authorList>
    </citation>
    <scope>PROTEIN SEQUENCE OF 129-138 AND 201-208</scope>
    <scope>MASS SPECTROMETRY</scope>
    <source>
        <strain>JRS4 / Serotype M6</strain>
    </source>
</reference>